<feature type="chain" id="PRO_0000302393" description="Glycine cleavage system H protein">
    <location>
        <begin position="1"/>
        <end position="131"/>
    </location>
</feature>
<feature type="domain" description="Lipoyl-binding" evidence="2">
    <location>
        <begin position="24"/>
        <end position="106"/>
    </location>
</feature>
<feature type="modified residue" description="N6-lipoyllysine" evidence="1">
    <location>
        <position position="65"/>
    </location>
</feature>
<sequence>MSEIPADLYYTSEHEWVLRTGDDTVRVGITDYAQSALGDVVFVQLPDVGADVASGDAFGEVESTKSVSDLYAPVTAKVVAVNGDLEGSPELVNSDPYGEGWLVDLRVEAGTLDEALGGLLDAEGYRAVVTE</sequence>
<proteinExistence type="evidence at protein level"/>
<keyword id="KW-0450">Lipoyl</keyword>
<keyword id="KW-1185">Reference proteome</keyword>
<name>GCSH_MYCS2</name>
<reference key="1">
    <citation type="submission" date="2006-10" db="EMBL/GenBank/DDBJ databases">
        <authorList>
            <person name="Fleischmann R.D."/>
            <person name="Dodson R.J."/>
            <person name="Haft D.H."/>
            <person name="Merkel J.S."/>
            <person name="Nelson W.C."/>
            <person name="Fraser C.M."/>
        </authorList>
    </citation>
    <scope>NUCLEOTIDE SEQUENCE [LARGE SCALE GENOMIC DNA]</scope>
    <source>
        <strain>ATCC 700084 / mc(2)155</strain>
    </source>
</reference>
<reference key="2">
    <citation type="journal article" date="2007" name="Genome Biol.">
        <title>Interrupted coding sequences in Mycobacterium smegmatis: authentic mutations or sequencing errors?</title>
        <authorList>
            <person name="Deshayes C."/>
            <person name="Perrodou E."/>
            <person name="Gallien S."/>
            <person name="Euphrasie D."/>
            <person name="Schaeffer C."/>
            <person name="Van-Dorsselaer A."/>
            <person name="Poch O."/>
            <person name="Lecompte O."/>
            <person name="Reyrat J.-M."/>
        </authorList>
    </citation>
    <scope>NUCLEOTIDE SEQUENCE [LARGE SCALE GENOMIC DNA]</scope>
    <source>
        <strain>ATCC 700084 / mc(2)155</strain>
    </source>
</reference>
<reference key="3">
    <citation type="journal article" date="2009" name="Genome Res.">
        <title>Ortho-proteogenomics: multiple proteomes investigation through orthology and a new MS-based protocol.</title>
        <authorList>
            <person name="Gallien S."/>
            <person name="Perrodou E."/>
            <person name="Carapito C."/>
            <person name="Deshayes C."/>
            <person name="Reyrat J.-M."/>
            <person name="Van Dorsselaer A."/>
            <person name="Poch O."/>
            <person name="Schaeffer C."/>
            <person name="Lecompte O."/>
        </authorList>
    </citation>
    <scope>NUCLEOTIDE SEQUENCE [LARGE SCALE GENOMIC DNA]</scope>
    <scope>IDENTIFICATION BY MASS SPECTROMETRY [LARGE SCALE ANALYSIS]</scope>
    <source>
        <strain>ATCC 700084 / mc(2)155</strain>
    </source>
</reference>
<protein>
    <recommendedName>
        <fullName evidence="1">Glycine cleavage system H protein</fullName>
    </recommendedName>
</protein>
<comment type="function">
    <text evidence="1">The glycine cleavage system catalyzes the degradation of glycine. The H protein shuttles the methylamine group of glycine from the P protein to the T protein.</text>
</comment>
<comment type="cofactor">
    <cofactor evidence="1">
        <name>(R)-lipoate</name>
        <dbReference type="ChEBI" id="CHEBI:83088"/>
    </cofactor>
    <text evidence="1">Binds 1 lipoyl cofactor covalently.</text>
</comment>
<comment type="subunit">
    <text evidence="1">The glycine cleavage system is composed of four proteins: P, T, L and H.</text>
</comment>
<comment type="similarity">
    <text evidence="1">Belongs to the GcvH family.</text>
</comment>
<accession>A0QYG3</accession>
<accession>I7FEX9</accession>
<organism>
    <name type="scientific">Mycolicibacterium smegmatis (strain ATCC 700084 / mc(2)155)</name>
    <name type="common">Mycobacterium smegmatis</name>
    <dbReference type="NCBI Taxonomy" id="246196"/>
    <lineage>
        <taxon>Bacteria</taxon>
        <taxon>Bacillati</taxon>
        <taxon>Actinomycetota</taxon>
        <taxon>Actinomycetes</taxon>
        <taxon>Mycobacteriales</taxon>
        <taxon>Mycobacteriaceae</taxon>
        <taxon>Mycolicibacterium</taxon>
    </lineage>
</organism>
<evidence type="ECO:0000255" key="1">
    <source>
        <dbReference type="HAMAP-Rule" id="MF_00272"/>
    </source>
</evidence>
<evidence type="ECO:0000255" key="2">
    <source>
        <dbReference type="PROSITE-ProRule" id="PRU01066"/>
    </source>
</evidence>
<dbReference type="EMBL" id="CP000480">
    <property type="protein sequence ID" value="ABK69914.1"/>
    <property type="molecule type" value="Genomic_DNA"/>
</dbReference>
<dbReference type="EMBL" id="CP001663">
    <property type="protein sequence ID" value="AFP40025.1"/>
    <property type="molecule type" value="Genomic_DNA"/>
</dbReference>
<dbReference type="RefSeq" id="WP_003895104.1">
    <property type="nucleotide sequence ID" value="NZ_SIJM01000008.1"/>
</dbReference>
<dbReference type="RefSeq" id="YP_887951.1">
    <property type="nucleotide sequence ID" value="NC_008596.1"/>
</dbReference>
<dbReference type="SMR" id="A0QYG3"/>
<dbReference type="STRING" id="246196.MSMEG_3648"/>
<dbReference type="PaxDb" id="246196-MSMEI_3562"/>
<dbReference type="GeneID" id="93458402"/>
<dbReference type="KEGG" id="msb:LJ00_18140"/>
<dbReference type="KEGG" id="msg:MSMEI_3562"/>
<dbReference type="KEGG" id="msm:MSMEG_3648"/>
<dbReference type="PATRIC" id="fig|246196.19.peg.3596"/>
<dbReference type="eggNOG" id="COG0509">
    <property type="taxonomic scope" value="Bacteria"/>
</dbReference>
<dbReference type="OrthoDB" id="9796712at2"/>
<dbReference type="Proteomes" id="UP000000757">
    <property type="component" value="Chromosome"/>
</dbReference>
<dbReference type="Proteomes" id="UP000006158">
    <property type="component" value="Chromosome"/>
</dbReference>
<dbReference type="GO" id="GO:0005829">
    <property type="term" value="C:cytosol"/>
    <property type="evidence" value="ECO:0007669"/>
    <property type="project" value="TreeGrafter"/>
</dbReference>
<dbReference type="GO" id="GO:0005960">
    <property type="term" value="C:glycine cleavage complex"/>
    <property type="evidence" value="ECO:0007669"/>
    <property type="project" value="InterPro"/>
</dbReference>
<dbReference type="GO" id="GO:0019464">
    <property type="term" value="P:glycine decarboxylation via glycine cleavage system"/>
    <property type="evidence" value="ECO:0007669"/>
    <property type="project" value="UniProtKB-UniRule"/>
</dbReference>
<dbReference type="CDD" id="cd06848">
    <property type="entry name" value="GCS_H"/>
    <property type="match status" value="1"/>
</dbReference>
<dbReference type="Gene3D" id="2.40.50.100">
    <property type="match status" value="1"/>
</dbReference>
<dbReference type="HAMAP" id="MF_00272">
    <property type="entry name" value="GcvH"/>
    <property type="match status" value="1"/>
</dbReference>
<dbReference type="InterPro" id="IPR000089">
    <property type="entry name" value="Biotin_lipoyl"/>
</dbReference>
<dbReference type="InterPro" id="IPR002930">
    <property type="entry name" value="GCV_H"/>
</dbReference>
<dbReference type="InterPro" id="IPR033753">
    <property type="entry name" value="GCV_H/Fam206"/>
</dbReference>
<dbReference type="InterPro" id="IPR017453">
    <property type="entry name" value="GCV_H_sub"/>
</dbReference>
<dbReference type="InterPro" id="IPR011053">
    <property type="entry name" value="Single_hybrid_motif"/>
</dbReference>
<dbReference type="NCBIfam" id="TIGR00527">
    <property type="entry name" value="gcvH"/>
    <property type="match status" value="1"/>
</dbReference>
<dbReference type="NCBIfam" id="NF002270">
    <property type="entry name" value="PRK01202.1"/>
    <property type="match status" value="1"/>
</dbReference>
<dbReference type="PANTHER" id="PTHR11715">
    <property type="entry name" value="GLYCINE CLEAVAGE SYSTEM H PROTEIN"/>
    <property type="match status" value="1"/>
</dbReference>
<dbReference type="PANTHER" id="PTHR11715:SF3">
    <property type="entry name" value="GLYCINE CLEAVAGE SYSTEM H PROTEIN-RELATED"/>
    <property type="match status" value="1"/>
</dbReference>
<dbReference type="Pfam" id="PF01597">
    <property type="entry name" value="GCV_H"/>
    <property type="match status" value="1"/>
</dbReference>
<dbReference type="SUPFAM" id="SSF51230">
    <property type="entry name" value="Single hybrid motif"/>
    <property type="match status" value="1"/>
</dbReference>
<dbReference type="PROSITE" id="PS50968">
    <property type="entry name" value="BIOTINYL_LIPOYL"/>
    <property type="match status" value="1"/>
</dbReference>
<gene>
    <name evidence="1" type="primary">gcvH</name>
    <name type="ordered locus">MSMEG_3648</name>
    <name type="ordered locus">MSMEI_3562</name>
</gene>